<protein>
    <recommendedName>
        <fullName>13S globulin seed storage protein 1</fullName>
    </recommendedName>
    <alternativeName>
        <fullName>Legumin-like protein 1</fullName>
    </alternativeName>
    <component>
        <recommendedName>
            <fullName>13S globulin seed storage protein 1 acidic chain</fullName>
        </recommendedName>
    </component>
    <component>
        <recommendedName>
            <fullName>13S globulin seed storage protein 1 basic chain</fullName>
        </recommendedName>
    </component>
</protein>
<name>13S1_FAGES</name>
<reference key="1">
    <citation type="journal article" date="2001" name="J. Agric. Food Chem.">
        <title>Expression, cloning, and immunological analysis of buckwheat (Fagopyrum esculentum Moench) seed storage proteins.</title>
        <authorList>
            <person name="Fujino K."/>
            <person name="Funatsuki H."/>
            <person name="Inada M."/>
            <person name="Shimono Y."/>
            <person name="Kikuta Y."/>
        </authorList>
    </citation>
    <scope>NUCLEOTIDE SEQUENCE [MRNA]</scope>
    <scope>TISSUE SPECIFICITY</scope>
    <scope>DEVELOPMENTAL STAGE</scope>
    <source>
        <strain>cv. Kitayuki</strain>
        <tissue>Immature seed</tissue>
    </source>
</reference>
<dbReference type="EMBL" id="D87980">
    <property type="protein sequence ID" value="BAA21758.1"/>
    <property type="molecule type" value="mRNA"/>
</dbReference>
<dbReference type="PIR" id="T10696">
    <property type="entry name" value="T10696"/>
</dbReference>
<dbReference type="SMR" id="O23878"/>
<dbReference type="Allergome" id="698">
    <property type="allergen name" value="Fag e 1"/>
</dbReference>
<dbReference type="GO" id="GO:0045735">
    <property type="term" value="F:nutrient reservoir activity"/>
    <property type="evidence" value="ECO:0007669"/>
    <property type="project" value="UniProtKB-KW"/>
</dbReference>
<dbReference type="CDD" id="cd02243">
    <property type="entry name" value="cupin_11S_legumin_C"/>
    <property type="match status" value="1"/>
</dbReference>
<dbReference type="CDD" id="cd02242">
    <property type="entry name" value="cupin_11S_legumin_N"/>
    <property type="match status" value="1"/>
</dbReference>
<dbReference type="FunFam" id="2.60.120.10:FF:000073">
    <property type="entry name" value="Glycinin G1"/>
    <property type="match status" value="1"/>
</dbReference>
<dbReference type="Gene3D" id="2.60.120.10">
    <property type="entry name" value="Jelly Rolls"/>
    <property type="match status" value="3"/>
</dbReference>
<dbReference type="InterPro" id="IPR006044">
    <property type="entry name" value="11S_seedstore_pln"/>
</dbReference>
<dbReference type="InterPro" id="IPR006045">
    <property type="entry name" value="Cupin_1"/>
</dbReference>
<dbReference type="InterPro" id="IPR014710">
    <property type="entry name" value="RmlC-like_jellyroll"/>
</dbReference>
<dbReference type="InterPro" id="IPR011051">
    <property type="entry name" value="RmlC_Cupin_sf"/>
</dbReference>
<dbReference type="InterPro" id="IPR050253">
    <property type="entry name" value="Seed_Storage-Functional"/>
</dbReference>
<dbReference type="PANTHER" id="PTHR31189:SF76">
    <property type="entry name" value="11S GLOBULIN SUBUNIT BETA-LIKE"/>
    <property type="match status" value="1"/>
</dbReference>
<dbReference type="PANTHER" id="PTHR31189">
    <property type="entry name" value="OS03G0336100 PROTEIN-RELATED"/>
    <property type="match status" value="1"/>
</dbReference>
<dbReference type="Pfam" id="PF00190">
    <property type="entry name" value="Cupin_1"/>
    <property type="match status" value="2"/>
</dbReference>
<dbReference type="PRINTS" id="PR00439">
    <property type="entry name" value="11SGLOBULIN"/>
</dbReference>
<dbReference type="SMART" id="SM00835">
    <property type="entry name" value="Cupin_1"/>
    <property type="match status" value="2"/>
</dbReference>
<dbReference type="SUPFAM" id="SSF51182">
    <property type="entry name" value="RmlC-like cupins"/>
    <property type="match status" value="1"/>
</dbReference>
<sequence length="565" mass="64518">MSTKLILSFSLCLMVLSCSAQLLPWRKGQRSRPHRGHQQFHHQCDVQRLTASEPSRRVRSEAGVTEIWDNDTPEFRCAGFVAVRVVIQPGGLLLPSYSNAPYITFVEQGRGVQGVVVPGCPETFQSESEFEYPQSQRDQRSRQSESEESSRGDQRTRQSESEEFSRGDQRTRQSESEEFSRGDQRTRQSESEEFSRGDQRTRQSESEEFSRGDQHQKIFRIRDGDVIPSPAGVVQWTHNDGDNDLISITLYDANSFQNQLDGNVRNFFLAGQSKQSREDRRSQRQTREEGSDRQSRESDDDEALLEANILTGFQDEILQEIFRNVDQETISKLRGDNDQRGFIVQARDLKLRVPEEYEEELQRERGDRKRGGSGRSNGLEQAFCNLKFKQNVNRPSRADVFNPRAGRINTVNSNNLPILEFIQLSAQHVVLYKNAILGPRWNLNAHSALYVTRGEGRVQVVGDEGRSVFDDNVQRGQILVVPQGFAVVLKAGREGLEWVELKNDDNAITSPIAGKTSVLRAIPVEVLANSYDISTKEAFRLKNGRQEVEVFLPFQSRDEKERERF</sequence>
<accession>O23878</accession>
<organism>
    <name type="scientific">Fagopyrum esculentum</name>
    <name type="common">Common buckwheat</name>
    <name type="synonym">Polygonum fagopyrum</name>
    <dbReference type="NCBI Taxonomy" id="3617"/>
    <lineage>
        <taxon>Eukaryota</taxon>
        <taxon>Viridiplantae</taxon>
        <taxon>Streptophyta</taxon>
        <taxon>Embryophyta</taxon>
        <taxon>Tracheophyta</taxon>
        <taxon>Spermatophyta</taxon>
        <taxon>Magnoliopsida</taxon>
        <taxon>eudicotyledons</taxon>
        <taxon>Gunneridae</taxon>
        <taxon>Pentapetalae</taxon>
        <taxon>Caryophyllales</taxon>
        <taxon>Polygonaceae</taxon>
        <taxon>Polygonoideae</taxon>
        <taxon>Fagopyreae</taxon>
        <taxon>Fagopyrum</taxon>
    </lineage>
</organism>
<evidence type="ECO:0000250" key="1"/>
<evidence type="ECO:0000255" key="2"/>
<evidence type="ECO:0000256" key="3">
    <source>
        <dbReference type="SAM" id="MobiDB-lite"/>
    </source>
</evidence>
<evidence type="ECO:0000269" key="4">
    <source>
    </source>
</evidence>
<evidence type="ECO:0000305" key="5"/>
<gene>
    <name type="primary">FA02</name>
</gene>
<feature type="signal peptide" evidence="2">
    <location>
        <begin position="1"/>
        <end position="20"/>
    </location>
</feature>
<feature type="chain" id="PRO_0000032003" description="13S globulin seed storage protein 1 acidic chain" evidence="1">
    <location>
        <begin position="21"/>
        <end position="377"/>
    </location>
</feature>
<feature type="chain" id="PRO_0000032004" description="13S globulin seed storage protein 1 basic chain" evidence="1">
    <location>
        <begin position="378"/>
        <end position="565"/>
    </location>
</feature>
<feature type="domain" description="Cupin type-1 1" evidence="2">
    <location>
        <begin position="49"/>
        <end position="331"/>
    </location>
</feature>
<feature type="domain" description="Cupin type-1 2" evidence="2">
    <location>
        <begin position="390"/>
        <end position="539"/>
    </location>
</feature>
<feature type="region of interest" description="Disordered" evidence="3">
    <location>
        <begin position="126"/>
        <end position="224"/>
    </location>
</feature>
<feature type="region of interest" description="Disordered" evidence="3">
    <location>
        <begin position="271"/>
        <end position="301"/>
    </location>
</feature>
<feature type="region of interest" description="Disordered" evidence="3">
    <location>
        <begin position="356"/>
        <end position="376"/>
    </location>
</feature>
<feature type="compositionally biased region" description="Basic and acidic residues" evidence="3">
    <location>
        <begin position="137"/>
        <end position="224"/>
    </location>
</feature>
<feature type="compositionally biased region" description="Basic and acidic residues" evidence="3">
    <location>
        <begin position="275"/>
        <end position="297"/>
    </location>
</feature>
<feature type="compositionally biased region" description="Basic and acidic residues" evidence="3">
    <location>
        <begin position="356"/>
        <end position="370"/>
    </location>
</feature>
<feature type="disulfide bond" evidence="1">
    <location>
        <begin position="44"/>
        <end position="77"/>
    </location>
</feature>
<feature type="disulfide bond" description="Interchain (between acidic and basic chains)" evidence="2">
    <location>
        <begin position="120"/>
        <end position="384"/>
    </location>
</feature>
<comment type="function">
    <text>Seed storage protein.</text>
</comment>
<comment type="subunit">
    <text evidence="1">Hexamer; each subunit is composed of an acidic and a basic chain derived from a single precursor and linked by a disulfide bond.</text>
</comment>
<comment type="tissue specificity">
    <text evidence="4">Expressed only in immature seeds.</text>
</comment>
<comment type="developmental stage">
    <text evidence="4">Expressed between 7 and 28 days after pollination.</text>
</comment>
<comment type="miscellaneous">
    <text>The sequence of the probable beta chain is highly homologous to the N-terminal sequence of BW24KD, a major buckwheat allergen.</text>
</comment>
<comment type="similarity">
    <text evidence="5">Belongs to the 11S seed storage protein (globulins) family.</text>
</comment>
<keyword id="KW-1015">Disulfide bond</keyword>
<keyword id="KW-0708">Seed storage protein</keyword>
<keyword id="KW-0732">Signal</keyword>
<keyword id="KW-0758">Storage protein</keyword>
<proteinExistence type="evidence at transcript level"/>